<comment type="function">
    <text>Confers resistance to late blight (Phytophthora infestans) races carrying the avirulence gene Avr1. Resistance proteins guard the plant against pathogens that contain an appropriate avirulence protein via an indirect interaction with this avirulence protein. That triggers a defense system including the hypersensitive response, which restricts the pathogen growth.</text>
</comment>
<comment type="subcellular location">
    <subcellularLocation>
        <location evidence="1">Cytoplasm</location>
    </subcellularLocation>
    <subcellularLocation>
        <location evidence="1">Membrane</location>
        <topology evidence="1">Peripheral membrane protein</topology>
    </subcellularLocation>
</comment>
<comment type="miscellaneous">
    <text>This protein is encoded by the haplotype A genome of the allohexaploid Solanum demissum.</text>
</comment>
<comment type="similarity">
    <text evidence="4">Belongs to the disease resistance NB-LRR family.</text>
</comment>
<keyword id="KW-0067">ATP-binding</keyword>
<keyword id="KW-0175">Coiled coil</keyword>
<keyword id="KW-0963">Cytoplasm</keyword>
<keyword id="KW-0381">Hypersensitive response</keyword>
<keyword id="KW-0433">Leucine-rich repeat</keyword>
<keyword id="KW-0472">Membrane</keyword>
<keyword id="KW-0547">Nucleotide-binding</keyword>
<keyword id="KW-0611">Plant defense</keyword>
<keyword id="KW-0677">Repeat</keyword>
<accession>Q6L438</accession>
<proteinExistence type="inferred from homology"/>
<gene>
    <name type="primary">R1A-6</name>
    <name type="ORF">PGEC668E02.12</name>
</gene>
<protein>
    <recommendedName>
        <fullName>Putative late blight resistance protein homolog R1A-6</fullName>
    </recommendedName>
</protein>
<name>R1A6_SOLDE</name>
<feature type="chain" id="PRO_0000233962" description="Putative late blight resistance protein homolog R1A-6">
    <location>
        <begin position="1"/>
        <end position="1306"/>
    </location>
</feature>
<feature type="domain" description="NB-ARC">
    <location>
        <begin position="521"/>
        <end position="808"/>
    </location>
</feature>
<feature type="repeat" description="LRR 1">
    <location>
        <begin position="858"/>
        <end position="881"/>
    </location>
</feature>
<feature type="repeat" description="LRR 2">
    <location>
        <begin position="921"/>
        <end position="935"/>
    </location>
</feature>
<feature type="repeat" description="LRR 3">
    <location>
        <begin position="936"/>
        <end position="961"/>
    </location>
</feature>
<feature type="repeat" description="LRR 4">
    <location>
        <begin position="979"/>
        <end position="1007"/>
    </location>
</feature>
<feature type="repeat" description="LRR 5">
    <location>
        <begin position="1010"/>
        <end position="1035"/>
    </location>
</feature>
<feature type="repeat" description="LRR 6">
    <location>
        <begin position="1057"/>
        <end position="1081"/>
    </location>
</feature>
<feature type="repeat" description="LRR 7">
    <location>
        <begin position="1082"/>
        <end position="1106"/>
    </location>
</feature>
<feature type="repeat" description="LRR 8">
    <location>
        <begin position="1110"/>
        <end position="1129"/>
    </location>
</feature>
<feature type="repeat" description="LRR 9">
    <location>
        <begin position="1130"/>
        <end position="1153"/>
    </location>
</feature>
<feature type="repeat" description="LRR 10">
    <location>
        <begin position="1156"/>
        <end position="1181"/>
    </location>
</feature>
<feature type="repeat" description="LRR 11">
    <location>
        <begin position="1216"/>
        <end position="1240"/>
    </location>
</feature>
<feature type="domain" description="HMA" evidence="3">
    <location>
        <begin position="1240"/>
        <end position="1306"/>
    </location>
</feature>
<feature type="coiled-coil region" evidence="2">
    <location>
        <begin position="407"/>
        <end position="428"/>
    </location>
</feature>
<feature type="coiled-coil region" evidence="2">
    <location>
        <begin position="520"/>
        <end position="542"/>
    </location>
</feature>
<feature type="binding site" evidence="2">
    <location>
        <begin position="554"/>
        <end position="561"/>
    </location>
    <ligand>
        <name>ATP</name>
        <dbReference type="ChEBI" id="CHEBI:30616"/>
    </ligand>
</feature>
<dbReference type="EMBL" id="AC144791">
    <property type="protein sequence ID" value="AAT39944.2"/>
    <property type="molecule type" value="Genomic_DNA"/>
</dbReference>
<dbReference type="SMR" id="Q6L438"/>
<dbReference type="GO" id="GO:0005737">
    <property type="term" value="C:cytoplasm"/>
    <property type="evidence" value="ECO:0007669"/>
    <property type="project" value="UniProtKB-SubCell"/>
</dbReference>
<dbReference type="GO" id="GO:0016020">
    <property type="term" value="C:membrane"/>
    <property type="evidence" value="ECO:0007669"/>
    <property type="project" value="UniProtKB-SubCell"/>
</dbReference>
<dbReference type="GO" id="GO:0043531">
    <property type="term" value="F:ADP binding"/>
    <property type="evidence" value="ECO:0007669"/>
    <property type="project" value="InterPro"/>
</dbReference>
<dbReference type="GO" id="GO:0005524">
    <property type="term" value="F:ATP binding"/>
    <property type="evidence" value="ECO:0007669"/>
    <property type="project" value="UniProtKB-KW"/>
</dbReference>
<dbReference type="GO" id="GO:0046872">
    <property type="term" value="F:metal ion binding"/>
    <property type="evidence" value="ECO:0007669"/>
    <property type="project" value="InterPro"/>
</dbReference>
<dbReference type="GO" id="GO:0009626">
    <property type="term" value="P:plant-type hypersensitive response"/>
    <property type="evidence" value="ECO:0007669"/>
    <property type="project" value="UniProtKB-KW"/>
</dbReference>
<dbReference type="CDD" id="cd14798">
    <property type="entry name" value="RX-CC_like"/>
    <property type="match status" value="1"/>
</dbReference>
<dbReference type="FunFam" id="3.40.50.300:FF:001091">
    <property type="entry name" value="Probable disease resistance protein At1g61300"/>
    <property type="match status" value="1"/>
</dbReference>
<dbReference type="FunFam" id="1.10.10.10:FF:000322">
    <property type="entry name" value="Probable disease resistance protein At1g63360"/>
    <property type="match status" value="1"/>
</dbReference>
<dbReference type="Gene3D" id="1.10.8.430">
    <property type="entry name" value="Helical domain of apoptotic protease-activating factors"/>
    <property type="match status" value="1"/>
</dbReference>
<dbReference type="Gene3D" id="3.40.50.300">
    <property type="entry name" value="P-loop containing nucleotide triphosphate hydrolases"/>
    <property type="match status" value="1"/>
</dbReference>
<dbReference type="Gene3D" id="3.80.10.10">
    <property type="entry name" value="Ribonuclease Inhibitor"/>
    <property type="match status" value="1"/>
</dbReference>
<dbReference type="Gene3D" id="1.10.10.10">
    <property type="entry name" value="Winged helix-like DNA-binding domain superfamily/Winged helix DNA-binding domain"/>
    <property type="match status" value="1"/>
</dbReference>
<dbReference type="InterPro" id="IPR042197">
    <property type="entry name" value="Apaf_helical"/>
</dbReference>
<dbReference type="InterPro" id="IPR044974">
    <property type="entry name" value="Disease_R_plants"/>
</dbReference>
<dbReference type="InterPro" id="IPR006121">
    <property type="entry name" value="HMA_dom"/>
</dbReference>
<dbReference type="InterPro" id="IPR032675">
    <property type="entry name" value="LRR_dom_sf"/>
</dbReference>
<dbReference type="InterPro" id="IPR002182">
    <property type="entry name" value="NB-ARC"/>
</dbReference>
<dbReference type="InterPro" id="IPR027417">
    <property type="entry name" value="P-loop_NTPase"/>
</dbReference>
<dbReference type="InterPro" id="IPR021929">
    <property type="entry name" value="R1A-like_N"/>
</dbReference>
<dbReference type="InterPro" id="IPR038005">
    <property type="entry name" value="RX-like_CC"/>
</dbReference>
<dbReference type="InterPro" id="IPR036388">
    <property type="entry name" value="WH-like_DNA-bd_sf"/>
</dbReference>
<dbReference type="PANTHER" id="PTHR23155:SF1152">
    <property type="entry name" value="AAA+ ATPASE DOMAIN-CONTAINING PROTEIN"/>
    <property type="match status" value="1"/>
</dbReference>
<dbReference type="PANTHER" id="PTHR23155">
    <property type="entry name" value="DISEASE RESISTANCE PROTEIN RP"/>
    <property type="match status" value="1"/>
</dbReference>
<dbReference type="Pfam" id="PF00931">
    <property type="entry name" value="NB-ARC"/>
    <property type="match status" value="1"/>
</dbReference>
<dbReference type="Pfam" id="PF12061">
    <property type="entry name" value="NB-LRR"/>
    <property type="match status" value="2"/>
</dbReference>
<dbReference type="Pfam" id="PF23559">
    <property type="entry name" value="WH_DRP"/>
    <property type="match status" value="1"/>
</dbReference>
<dbReference type="PRINTS" id="PR00364">
    <property type="entry name" value="DISEASERSIST"/>
</dbReference>
<dbReference type="SUPFAM" id="SSF52058">
    <property type="entry name" value="L domain-like"/>
    <property type="match status" value="1"/>
</dbReference>
<dbReference type="SUPFAM" id="SSF52540">
    <property type="entry name" value="P-loop containing nucleoside triphosphate hydrolases"/>
    <property type="match status" value="1"/>
</dbReference>
<dbReference type="PROSITE" id="PS50846">
    <property type="entry name" value="HMA_2"/>
    <property type="match status" value="1"/>
</dbReference>
<reference key="1">
    <citation type="journal article" date="2005" name="Plant J.">
        <title>The R1 resistance gene cluster contains three groups of independently evolving, type I R1 homologues and shows substantial structural variation among haplotypes of Solanum demissum.</title>
        <authorList>
            <person name="Kuang H."/>
            <person name="Wei F."/>
            <person name="Marano M.R."/>
            <person name="Wirtz U."/>
            <person name="Wang X."/>
            <person name="Liu J."/>
            <person name="Shum W.P."/>
            <person name="Zaborsky J."/>
            <person name="Tallon L.J."/>
            <person name="Rensink W."/>
            <person name="Lobst S."/>
            <person name="Zhang P."/>
            <person name="Tornqvist C.-E."/>
            <person name="Tek A."/>
            <person name="Bamberg J."/>
            <person name="Helgeson J."/>
            <person name="Fry W."/>
            <person name="You F."/>
            <person name="Luo M.-C."/>
            <person name="Jiang J."/>
            <person name="Buell C.R."/>
            <person name="Baker B."/>
        </authorList>
    </citation>
    <scope>NUCLEOTIDE SEQUENCE [GENOMIC DNA]</scope>
</reference>
<organism>
    <name type="scientific">Solanum demissum</name>
    <name type="common">Wild potato</name>
    <dbReference type="NCBI Taxonomy" id="50514"/>
    <lineage>
        <taxon>Eukaryota</taxon>
        <taxon>Viridiplantae</taxon>
        <taxon>Streptophyta</taxon>
        <taxon>Embryophyta</taxon>
        <taxon>Tracheophyta</taxon>
        <taxon>Spermatophyta</taxon>
        <taxon>Magnoliopsida</taxon>
        <taxon>eudicotyledons</taxon>
        <taxon>Gunneridae</taxon>
        <taxon>Pentapetalae</taxon>
        <taxon>asterids</taxon>
        <taxon>lamiids</taxon>
        <taxon>Solanales</taxon>
        <taxon>Solanaceae</taxon>
        <taxon>Solanoideae</taxon>
        <taxon>Solaneae</taxon>
        <taxon>Solanum</taxon>
    </lineage>
</organism>
<evidence type="ECO:0000250" key="1"/>
<evidence type="ECO:0000255" key="2"/>
<evidence type="ECO:0000255" key="3">
    <source>
        <dbReference type="PROSITE-ProRule" id="PRU00280"/>
    </source>
</evidence>
<evidence type="ECO:0000305" key="4"/>
<sequence>MYFNNELSDLKDHLLRKLQYYTYSDVVRDRINFILWEFKFLDCFLYLKSFPFASECGMLHVSQKMIEIWKSQWNKLIYICMYDEEGSPWDAVVYWKELISQTKQEFRAQYSFPKSPLAANEVIDDDDDDNTHSPEFVMEVIGFFVGNINVLVKINDPCSCFFVPGLKEQIEQILKELKLLRFLVCFVSNKCIVPQYRCTTFYTRALIEASYIAMVAWLYLPIYGNGNQDLAPSEVSRLLSDFMEMKIKSIEPGISRNSIYIDVLQALKSTIPQAQKKHVEIPTHSLTVGLSDQMANLQEMLCLLRDNLIHLPILDLEFHLQDMDSVIVDAGLLIYSLYDIKGQMEDTSLDVINWALGFDLPRNIEPIKVMAYLVMQKAFHCNLPRIHGLGYVDFLLKNLNDFQDCYSDSLAFLKNQLQVIQTEFESLQPFLKVVAEEPHNKLKTLNEDCATQIIRKAYEVEYVVDACINKEALHWCLERWLLDIIEEITCIKAKIQEKNTVEDTMKTVIARTSSKLARTPRMKEEIVGFEDVIENLRKKLLSRTKGQDVISIHGMPGLGKTTLANRLYSDRSVVSQFDFCAQCCVSQVYSCKDLLLSLLRDAIGEESERRELPDNELADMLRKTLLPRRYLILVDDVWDNSAWDDLRGCFPDVNNRSRIILTTRHHEVAKYASVRSDPLHLRMFDEVESWKLLEKKVFGEQSCPPLLKNIGLRIAKMCGQLPLSIVLVAGILSEMEKDVECWEQVANNLGSHIHNDSRAIVDQSYHVLPCHLKSCFLYFGAFLEDRVIDISRLIRLWISEAFIKSSEGRSLEDIAEGYLENLIGRNLVMVTQRAISDGKVKACRLHDVLLDFCKERAAEENFLLWINRDQITKPSSCVYSHKQHAHLAFTEMHNLVEWSASCSFVGSVVLSNKYEPYFHDLSSLHDFSISRILPNFKFLKVLDLEHRVFIDFIPTELPYLRYFSALIDQNSIPSSISNLWNLETLILNRRSADSHNRVLLPSTVWDMVKLRHLHIPNFSPENKKALLKNSPNLDDLETLSYPYFARVKDAELMLRKTPNLRKLTCKVKCLEYLHQYHALNFPIRLEILKLYRSNAFKAIPFCISAPNLKYLKLSGFYLDSQYLSKTADHLKNLEVLKLYYVEFGDHREWKVSNGMFPQLKILKLEDVSLMKWIVADDAFPNLEQLVLRGCQDLMEIPSCFMDILSLQYIEVEDCNESVVKSAMNIQETQVEDYQNTNFKLVLIEKWPKFYKLFSQLSLPRGLVLHLGIESVSSDEKEKKLTVTGDVDADEVQLVVEKLRKCGMPGL</sequence>